<protein>
    <recommendedName>
        <fullName evidence="1">Phosphatidylglycerol--prolipoprotein diacylglyceryl transferase</fullName>
        <ecNumber evidence="1">2.5.1.145</ecNumber>
    </recommendedName>
</protein>
<sequence>MTNSYLAFPKFDPVIFSIGPVSLHWYGLMYLVGFVFAMWLAVRRANKPGSGWTKDEVENLLYAGFLGVFVGGRVGYVLFYNLPLFMENPLYLFKVWDGGMSFHGGLMGVILVMFWFARRTKRTFFQVSDFIAPLIPFGLGAGRLGNFINGELWGRVTTDTPWAMLFPSSRAEDVALAAADPKLLPILNQYGVLPRHPSQLYELLLEGVVLFIILNLFIRKPRPMGAVSGLFLIGYGAFRIIVEAFRQPDAQLGLFDGVISMGQILSVPMVVAGIIMMIWAYRRRPQQQLS</sequence>
<proteinExistence type="inferred from homology"/>
<accession>A8GIH8</accession>
<dbReference type="EC" id="2.5.1.145" evidence="1"/>
<dbReference type="EMBL" id="CP000826">
    <property type="protein sequence ID" value="ABV42918.1"/>
    <property type="molecule type" value="Genomic_DNA"/>
</dbReference>
<dbReference type="SMR" id="A8GIH8"/>
<dbReference type="STRING" id="399741.Spro_3822"/>
<dbReference type="KEGG" id="spe:Spro_3822"/>
<dbReference type="eggNOG" id="COG0682">
    <property type="taxonomic scope" value="Bacteria"/>
</dbReference>
<dbReference type="HOGENOM" id="CLU_013386_1_0_6"/>
<dbReference type="OrthoDB" id="871140at2"/>
<dbReference type="UniPathway" id="UPA00664"/>
<dbReference type="GO" id="GO:0005886">
    <property type="term" value="C:plasma membrane"/>
    <property type="evidence" value="ECO:0007669"/>
    <property type="project" value="UniProtKB-SubCell"/>
</dbReference>
<dbReference type="GO" id="GO:0008961">
    <property type="term" value="F:phosphatidylglycerol-prolipoprotein diacylglyceryl transferase activity"/>
    <property type="evidence" value="ECO:0007669"/>
    <property type="project" value="UniProtKB-UniRule"/>
</dbReference>
<dbReference type="GO" id="GO:0042158">
    <property type="term" value="P:lipoprotein biosynthetic process"/>
    <property type="evidence" value="ECO:0007669"/>
    <property type="project" value="UniProtKB-UniRule"/>
</dbReference>
<dbReference type="HAMAP" id="MF_01147">
    <property type="entry name" value="Lgt"/>
    <property type="match status" value="1"/>
</dbReference>
<dbReference type="InterPro" id="IPR001640">
    <property type="entry name" value="Lgt"/>
</dbReference>
<dbReference type="NCBIfam" id="TIGR00544">
    <property type="entry name" value="lgt"/>
    <property type="match status" value="1"/>
</dbReference>
<dbReference type="PANTHER" id="PTHR30589:SF0">
    <property type="entry name" value="PHOSPHATIDYLGLYCEROL--PROLIPOPROTEIN DIACYLGLYCERYL TRANSFERASE"/>
    <property type="match status" value="1"/>
</dbReference>
<dbReference type="PANTHER" id="PTHR30589">
    <property type="entry name" value="PROLIPOPROTEIN DIACYLGLYCERYL TRANSFERASE"/>
    <property type="match status" value="1"/>
</dbReference>
<dbReference type="Pfam" id="PF01790">
    <property type="entry name" value="LGT"/>
    <property type="match status" value="1"/>
</dbReference>
<dbReference type="PROSITE" id="PS01311">
    <property type="entry name" value="LGT"/>
    <property type="match status" value="1"/>
</dbReference>
<keyword id="KW-0997">Cell inner membrane</keyword>
<keyword id="KW-1003">Cell membrane</keyword>
<keyword id="KW-0472">Membrane</keyword>
<keyword id="KW-0808">Transferase</keyword>
<keyword id="KW-0812">Transmembrane</keyword>
<keyword id="KW-1133">Transmembrane helix</keyword>
<name>LGT_SERP5</name>
<evidence type="ECO:0000255" key="1">
    <source>
        <dbReference type="HAMAP-Rule" id="MF_01147"/>
    </source>
</evidence>
<reference key="1">
    <citation type="submission" date="2007-09" db="EMBL/GenBank/DDBJ databases">
        <title>Complete sequence of chromosome of Serratia proteamaculans 568.</title>
        <authorList>
            <consortium name="US DOE Joint Genome Institute"/>
            <person name="Copeland A."/>
            <person name="Lucas S."/>
            <person name="Lapidus A."/>
            <person name="Barry K."/>
            <person name="Glavina del Rio T."/>
            <person name="Dalin E."/>
            <person name="Tice H."/>
            <person name="Pitluck S."/>
            <person name="Chain P."/>
            <person name="Malfatti S."/>
            <person name="Shin M."/>
            <person name="Vergez L."/>
            <person name="Schmutz J."/>
            <person name="Larimer F."/>
            <person name="Land M."/>
            <person name="Hauser L."/>
            <person name="Kyrpides N."/>
            <person name="Kim E."/>
            <person name="Taghavi S."/>
            <person name="Newman L."/>
            <person name="Vangronsveld J."/>
            <person name="van der Lelie D."/>
            <person name="Richardson P."/>
        </authorList>
    </citation>
    <scope>NUCLEOTIDE SEQUENCE [LARGE SCALE GENOMIC DNA]</scope>
    <source>
        <strain>568</strain>
    </source>
</reference>
<organism>
    <name type="scientific">Serratia proteamaculans (strain 568)</name>
    <dbReference type="NCBI Taxonomy" id="399741"/>
    <lineage>
        <taxon>Bacteria</taxon>
        <taxon>Pseudomonadati</taxon>
        <taxon>Pseudomonadota</taxon>
        <taxon>Gammaproteobacteria</taxon>
        <taxon>Enterobacterales</taxon>
        <taxon>Yersiniaceae</taxon>
        <taxon>Serratia</taxon>
    </lineage>
</organism>
<feature type="chain" id="PRO_1000065483" description="Phosphatidylglycerol--prolipoprotein diacylglyceryl transferase">
    <location>
        <begin position="1"/>
        <end position="290"/>
    </location>
</feature>
<feature type="transmembrane region" description="Helical" evidence="1">
    <location>
        <begin position="21"/>
        <end position="41"/>
    </location>
</feature>
<feature type="transmembrane region" description="Helical" evidence="1">
    <location>
        <begin position="60"/>
        <end position="80"/>
    </location>
</feature>
<feature type="transmembrane region" description="Helical" evidence="1">
    <location>
        <begin position="96"/>
        <end position="116"/>
    </location>
</feature>
<feature type="transmembrane region" description="Helical" evidence="1">
    <location>
        <begin position="130"/>
        <end position="150"/>
    </location>
</feature>
<feature type="transmembrane region" description="Helical" evidence="1">
    <location>
        <begin position="198"/>
        <end position="218"/>
    </location>
</feature>
<feature type="transmembrane region" description="Helical" evidence="1">
    <location>
        <begin position="225"/>
        <end position="245"/>
    </location>
</feature>
<feature type="transmembrane region" description="Helical" evidence="1">
    <location>
        <begin position="258"/>
        <end position="278"/>
    </location>
</feature>
<feature type="binding site" evidence="1">
    <location>
        <position position="143"/>
    </location>
    <ligand>
        <name>a 1,2-diacyl-sn-glycero-3-phospho-(1'-sn-glycerol)</name>
        <dbReference type="ChEBI" id="CHEBI:64716"/>
    </ligand>
</feature>
<comment type="function">
    <text evidence="1">Catalyzes the transfer of the diacylglyceryl group from phosphatidylglycerol to the sulfhydryl group of the N-terminal cysteine of a prolipoprotein, the first step in the formation of mature lipoproteins.</text>
</comment>
<comment type="catalytic activity">
    <reaction evidence="1">
        <text>L-cysteinyl-[prolipoprotein] + a 1,2-diacyl-sn-glycero-3-phospho-(1'-sn-glycerol) = an S-1,2-diacyl-sn-glyceryl-L-cysteinyl-[prolipoprotein] + sn-glycerol 1-phosphate + H(+)</text>
        <dbReference type="Rhea" id="RHEA:56712"/>
        <dbReference type="Rhea" id="RHEA-COMP:14679"/>
        <dbReference type="Rhea" id="RHEA-COMP:14680"/>
        <dbReference type="ChEBI" id="CHEBI:15378"/>
        <dbReference type="ChEBI" id="CHEBI:29950"/>
        <dbReference type="ChEBI" id="CHEBI:57685"/>
        <dbReference type="ChEBI" id="CHEBI:64716"/>
        <dbReference type="ChEBI" id="CHEBI:140658"/>
        <dbReference type="EC" id="2.5.1.145"/>
    </reaction>
</comment>
<comment type="pathway">
    <text evidence="1">Protein modification; lipoprotein biosynthesis (diacylglyceryl transfer).</text>
</comment>
<comment type="subcellular location">
    <subcellularLocation>
        <location evidence="1">Cell inner membrane</location>
        <topology evidence="1">Multi-pass membrane protein</topology>
    </subcellularLocation>
</comment>
<comment type="similarity">
    <text evidence="1">Belongs to the Lgt family.</text>
</comment>
<gene>
    <name evidence="1" type="primary">lgt</name>
    <name type="ordered locus">Spro_3822</name>
</gene>